<name>HMUV_PSEPK</name>
<organism>
    <name type="scientific">Pseudomonas putida (strain ATCC 47054 / DSM 6125 / CFBP 8728 / NCIMB 11950 / KT2440)</name>
    <dbReference type="NCBI Taxonomy" id="160488"/>
    <lineage>
        <taxon>Bacteria</taxon>
        <taxon>Pseudomonadati</taxon>
        <taxon>Pseudomonadota</taxon>
        <taxon>Gammaproteobacteria</taxon>
        <taxon>Pseudomonadales</taxon>
        <taxon>Pseudomonadaceae</taxon>
        <taxon>Pseudomonas</taxon>
    </lineage>
</organism>
<protein>
    <recommendedName>
        <fullName evidence="1">Hemin import ATP-binding protein HmuV</fullName>
        <ecNumber evidence="1">7.6.2.-</ecNumber>
    </recommendedName>
</protein>
<reference key="1">
    <citation type="journal article" date="2002" name="Environ. Microbiol.">
        <title>Complete genome sequence and comparative analysis of the metabolically versatile Pseudomonas putida KT2440.</title>
        <authorList>
            <person name="Nelson K.E."/>
            <person name="Weinel C."/>
            <person name="Paulsen I.T."/>
            <person name="Dodson R.J."/>
            <person name="Hilbert H."/>
            <person name="Martins dos Santos V.A.P."/>
            <person name="Fouts D.E."/>
            <person name="Gill S.R."/>
            <person name="Pop M."/>
            <person name="Holmes M."/>
            <person name="Brinkac L.M."/>
            <person name="Beanan M.J."/>
            <person name="DeBoy R.T."/>
            <person name="Daugherty S.C."/>
            <person name="Kolonay J.F."/>
            <person name="Madupu R."/>
            <person name="Nelson W.C."/>
            <person name="White O."/>
            <person name="Peterson J.D."/>
            <person name="Khouri H.M."/>
            <person name="Hance I."/>
            <person name="Chris Lee P."/>
            <person name="Holtzapple E.K."/>
            <person name="Scanlan D."/>
            <person name="Tran K."/>
            <person name="Moazzez A."/>
            <person name="Utterback T.R."/>
            <person name="Rizzo M."/>
            <person name="Lee K."/>
            <person name="Kosack D."/>
            <person name="Moestl D."/>
            <person name="Wedler H."/>
            <person name="Lauber J."/>
            <person name="Stjepandic D."/>
            <person name="Hoheisel J."/>
            <person name="Straetz M."/>
            <person name="Heim S."/>
            <person name="Kiewitz C."/>
            <person name="Eisen J.A."/>
            <person name="Timmis K.N."/>
            <person name="Duesterhoeft A."/>
            <person name="Tuemmler B."/>
            <person name="Fraser C.M."/>
        </authorList>
    </citation>
    <scope>NUCLEOTIDE SEQUENCE [LARGE SCALE GENOMIC DNA]</scope>
    <source>
        <strain>ATCC 47054 / DSM 6125 / CFBP 8728 / NCIMB 11950 / KT2440</strain>
    </source>
</reference>
<sequence length="255" mass="27656">MLQVEGLYLCRGSNEVLHDIHLQLPPGQVVGVLGPNGAGKSSLLSVLCGELAPDRGRVTLQGRPLADWAGQERARRLAVLPQVSSLGFSFRVEEVVGMGRMPHGTGQRRDAEIVEAALRAADAWHLVARSYLALSGGERQRVHLARVLAQLWPGEEGSTLLLDEPTSMLDPLHQHTTLEAVRRFADCGAAVLVILHDLNLAARYCDRILLLEQGRCHAFATPEAALTPAALKAVYGIDVLVQAHPERGHPLIITR</sequence>
<keyword id="KW-0067">ATP-binding</keyword>
<keyword id="KW-0997">Cell inner membrane</keyword>
<keyword id="KW-1003">Cell membrane</keyword>
<keyword id="KW-0472">Membrane</keyword>
<keyword id="KW-0547">Nucleotide-binding</keyword>
<keyword id="KW-1185">Reference proteome</keyword>
<keyword id="KW-1278">Translocase</keyword>
<keyword id="KW-0813">Transport</keyword>
<accession>Q88DY1</accession>
<comment type="function">
    <text evidence="1">Part of the ABC transporter complex HmuTUV involved in hemin import. Responsible for energy coupling to the transport system.</text>
</comment>
<comment type="subunit">
    <text evidence="1">The complex is composed of two ATP-binding proteins (HmuV), two transmembrane proteins (HmuU) and a solute-binding protein (HmuT).</text>
</comment>
<comment type="subcellular location">
    <subcellularLocation>
        <location evidence="1">Cell inner membrane</location>
        <topology evidence="1">Peripheral membrane protein</topology>
    </subcellularLocation>
</comment>
<comment type="similarity">
    <text evidence="1">Belongs to the ABC transporter superfamily. Heme (hemin) importer (TC 3.A.1.14.5) family.</text>
</comment>
<feature type="chain" id="PRO_0000269613" description="Hemin import ATP-binding protein HmuV">
    <location>
        <begin position="1"/>
        <end position="255"/>
    </location>
</feature>
<feature type="domain" description="ABC transporter" evidence="1">
    <location>
        <begin position="2"/>
        <end position="238"/>
    </location>
</feature>
<feature type="binding site" evidence="1">
    <location>
        <begin position="34"/>
        <end position="41"/>
    </location>
    <ligand>
        <name>ATP</name>
        <dbReference type="ChEBI" id="CHEBI:30616"/>
    </ligand>
</feature>
<proteinExistence type="inferred from homology"/>
<gene>
    <name evidence="1" type="primary">hmuV</name>
    <name type="ordered locus">PP_4687</name>
</gene>
<evidence type="ECO:0000255" key="1">
    <source>
        <dbReference type="HAMAP-Rule" id="MF_01718"/>
    </source>
</evidence>
<dbReference type="EC" id="7.6.2.-" evidence="1"/>
<dbReference type="EMBL" id="AE015451">
    <property type="protein sequence ID" value="AAN70260.1"/>
    <property type="molecule type" value="Genomic_DNA"/>
</dbReference>
<dbReference type="RefSeq" id="NP_746796.1">
    <property type="nucleotide sequence ID" value="NC_002947.4"/>
</dbReference>
<dbReference type="RefSeq" id="WP_010955339.1">
    <property type="nucleotide sequence ID" value="NZ_CP169744.1"/>
</dbReference>
<dbReference type="SMR" id="Q88DY1"/>
<dbReference type="STRING" id="160488.PP_4687"/>
<dbReference type="PaxDb" id="160488-PP_4687"/>
<dbReference type="KEGG" id="ppu:PP_4687"/>
<dbReference type="PATRIC" id="fig|160488.4.peg.4995"/>
<dbReference type="eggNOG" id="COG4559">
    <property type="taxonomic scope" value="Bacteria"/>
</dbReference>
<dbReference type="HOGENOM" id="CLU_000604_1_11_6"/>
<dbReference type="OrthoDB" id="5292475at2"/>
<dbReference type="PhylomeDB" id="Q88DY1"/>
<dbReference type="BioCyc" id="PPUT160488:G1G01-5006-MONOMER"/>
<dbReference type="Proteomes" id="UP000000556">
    <property type="component" value="Chromosome"/>
</dbReference>
<dbReference type="GO" id="GO:0005886">
    <property type="term" value="C:plasma membrane"/>
    <property type="evidence" value="ECO:0007669"/>
    <property type="project" value="UniProtKB-SubCell"/>
</dbReference>
<dbReference type="GO" id="GO:0005524">
    <property type="term" value="F:ATP binding"/>
    <property type="evidence" value="ECO:0007669"/>
    <property type="project" value="UniProtKB-KW"/>
</dbReference>
<dbReference type="GO" id="GO:0016887">
    <property type="term" value="F:ATP hydrolysis activity"/>
    <property type="evidence" value="ECO:0007669"/>
    <property type="project" value="InterPro"/>
</dbReference>
<dbReference type="CDD" id="cd03214">
    <property type="entry name" value="ABC_Iron-Siderophores_B12_Hemin"/>
    <property type="match status" value="1"/>
</dbReference>
<dbReference type="Gene3D" id="3.40.50.300">
    <property type="entry name" value="P-loop containing nucleotide triphosphate hydrolases"/>
    <property type="match status" value="1"/>
</dbReference>
<dbReference type="InterPro" id="IPR003593">
    <property type="entry name" value="AAA+_ATPase"/>
</dbReference>
<dbReference type="InterPro" id="IPR003439">
    <property type="entry name" value="ABC_transporter-like_ATP-bd"/>
</dbReference>
<dbReference type="InterPro" id="IPR027417">
    <property type="entry name" value="P-loop_NTPase"/>
</dbReference>
<dbReference type="NCBIfam" id="NF010068">
    <property type="entry name" value="PRK13548.1"/>
    <property type="match status" value="1"/>
</dbReference>
<dbReference type="PANTHER" id="PTHR42794">
    <property type="entry name" value="HEMIN IMPORT ATP-BINDING PROTEIN HMUV"/>
    <property type="match status" value="1"/>
</dbReference>
<dbReference type="PANTHER" id="PTHR42794:SF1">
    <property type="entry name" value="HEMIN IMPORT ATP-BINDING PROTEIN HMUV"/>
    <property type="match status" value="1"/>
</dbReference>
<dbReference type="Pfam" id="PF00005">
    <property type="entry name" value="ABC_tran"/>
    <property type="match status" value="1"/>
</dbReference>
<dbReference type="SMART" id="SM00382">
    <property type="entry name" value="AAA"/>
    <property type="match status" value="1"/>
</dbReference>
<dbReference type="SUPFAM" id="SSF52540">
    <property type="entry name" value="P-loop containing nucleoside triphosphate hydrolases"/>
    <property type="match status" value="1"/>
</dbReference>
<dbReference type="PROSITE" id="PS50893">
    <property type="entry name" value="ABC_TRANSPORTER_2"/>
    <property type="match status" value="1"/>
</dbReference>
<dbReference type="PROSITE" id="PS51261">
    <property type="entry name" value="HMUV"/>
    <property type="match status" value="1"/>
</dbReference>